<proteinExistence type="inferred from homology"/>
<gene>
    <name evidence="1" type="primary">bioB</name>
    <name type="ordered locus">Cj1685c</name>
</gene>
<accession>Q0P7U6</accession>
<dbReference type="EC" id="2.8.1.6" evidence="1"/>
<dbReference type="EMBL" id="AL111168">
    <property type="protein sequence ID" value="CAL35779.1"/>
    <property type="molecule type" value="Genomic_DNA"/>
</dbReference>
<dbReference type="PIR" id="A81266">
    <property type="entry name" value="A81266"/>
</dbReference>
<dbReference type="RefSeq" id="WP_002851400.1">
    <property type="nucleotide sequence ID" value="NZ_SZUC01000002.1"/>
</dbReference>
<dbReference type="RefSeq" id="YP_002345051.1">
    <property type="nucleotide sequence ID" value="NC_002163.1"/>
</dbReference>
<dbReference type="SMR" id="Q0P7U6"/>
<dbReference type="IntAct" id="Q0P7U6">
    <property type="interactions" value="23"/>
</dbReference>
<dbReference type="STRING" id="192222.Cj1685c"/>
<dbReference type="PaxDb" id="192222-Cj1685c"/>
<dbReference type="EnsemblBacteria" id="CAL35779">
    <property type="protein sequence ID" value="CAL35779"/>
    <property type="gene ID" value="Cj1685c"/>
</dbReference>
<dbReference type="GeneID" id="905959"/>
<dbReference type="KEGG" id="cje:Cj1685c"/>
<dbReference type="PATRIC" id="fig|192222.6.peg.1659"/>
<dbReference type="eggNOG" id="COG0502">
    <property type="taxonomic scope" value="Bacteria"/>
</dbReference>
<dbReference type="HOGENOM" id="CLU_033172_2_1_7"/>
<dbReference type="OrthoDB" id="9786826at2"/>
<dbReference type="UniPathway" id="UPA00078">
    <property type="reaction ID" value="UER00162"/>
</dbReference>
<dbReference type="Proteomes" id="UP000000799">
    <property type="component" value="Chromosome"/>
</dbReference>
<dbReference type="GO" id="GO:0051537">
    <property type="term" value="F:2 iron, 2 sulfur cluster binding"/>
    <property type="evidence" value="ECO:0007669"/>
    <property type="project" value="UniProtKB-KW"/>
</dbReference>
<dbReference type="GO" id="GO:0051539">
    <property type="term" value="F:4 iron, 4 sulfur cluster binding"/>
    <property type="evidence" value="ECO:0007669"/>
    <property type="project" value="UniProtKB-KW"/>
</dbReference>
<dbReference type="GO" id="GO:0004076">
    <property type="term" value="F:biotin synthase activity"/>
    <property type="evidence" value="ECO:0007669"/>
    <property type="project" value="UniProtKB-UniRule"/>
</dbReference>
<dbReference type="GO" id="GO:0005506">
    <property type="term" value="F:iron ion binding"/>
    <property type="evidence" value="ECO:0007669"/>
    <property type="project" value="UniProtKB-UniRule"/>
</dbReference>
<dbReference type="GO" id="GO:0009102">
    <property type="term" value="P:biotin biosynthetic process"/>
    <property type="evidence" value="ECO:0007669"/>
    <property type="project" value="UniProtKB-UniRule"/>
</dbReference>
<dbReference type="CDD" id="cd01335">
    <property type="entry name" value="Radical_SAM"/>
    <property type="match status" value="1"/>
</dbReference>
<dbReference type="Gene3D" id="3.20.20.70">
    <property type="entry name" value="Aldolase class I"/>
    <property type="match status" value="1"/>
</dbReference>
<dbReference type="HAMAP" id="MF_01694">
    <property type="entry name" value="BioB"/>
    <property type="match status" value="1"/>
</dbReference>
<dbReference type="InterPro" id="IPR013785">
    <property type="entry name" value="Aldolase_TIM"/>
</dbReference>
<dbReference type="InterPro" id="IPR010722">
    <property type="entry name" value="BATS_dom"/>
</dbReference>
<dbReference type="InterPro" id="IPR002684">
    <property type="entry name" value="Biotin_synth/BioAB"/>
</dbReference>
<dbReference type="InterPro" id="IPR024177">
    <property type="entry name" value="Biotin_synthase"/>
</dbReference>
<dbReference type="InterPro" id="IPR006638">
    <property type="entry name" value="Elp3/MiaA/NifB-like_rSAM"/>
</dbReference>
<dbReference type="InterPro" id="IPR007197">
    <property type="entry name" value="rSAM"/>
</dbReference>
<dbReference type="NCBIfam" id="TIGR00433">
    <property type="entry name" value="bioB"/>
    <property type="match status" value="1"/>
</dbReference>
<dbReference type="NCBIfam" id="NF006308">
    <property type="entry name" value="PRK08508.1"/>
    <property type="match status" value="1"/>
</dbReference>
<dbReference type="PANTHER" id="PTHR22976">
    <property type="entry name" value="BIOTIN SYNTHASE"/>
    <property type="match status" value="1"/>
</dbReference>
<dbReference type="PANTHER" id="PTHR22976:SF2">
    <property type="entry name" value="BIOTIN SYNTHASE, MITOCHONDRIAL"/>
    <property type="match status" value="1"/>
</dbReference>
<dbReference type="Pfam" id="PF06968">
    <property type="entry name" value="BATS"/>
    <property type="match status" value="1"/>
</dbReference>
<dbReference type="Pfam" id="PF04055">
    <property type="entry name" value="Radical_SAM"/>
    <property type="match status" value="1"/>
</dbReference>
<dbReference type="PIRSF" id="PIRSF001619">
    <property type="entry name" value="Biotin_synth"/>
    <property type="match status" value="1"/>
</dbReference>
<dbReference type="SFLD" id="SFLDG01278">
    <property type="entry name" value="biotin_synthase_like"/>
    <property type="match status" value="1"/>
</dbReference>
<dbReference type="SFLD" id="SFLDS00029">
    <property type="entry name" value="Radical_SAM"/>
    <property type="match status" value="1"/>
</dbReference>
<dbReference type="SMART" id="SM00876">
    <property type="entry name" value="BATS"/>
    <property type="match status" value="1"/>
</dbReference>
<dbReference type="SMART" id="SM00729">
    <property type="entry name" value="Elp3"/>
    <property type="match status" value="1"/>
</dbReference>
<dbReference type="SUPFAM" id="SSF102114">
    <property type="entry name" value="Radical SAM enzymes"/>
    <property type="match status" value="1"/>
</dbReference>
<dbReference type="PROSITE" id="PS51918">
    <property type="entry name" value="RADICAL_SAM"/>
    <property type="match status" value="1"/>
</dbReference>
<sequence length="278" mass="30942">MQIMLCAISNIASGNCSEDCKYCTQSAHVKTDIQKYRRKELSQIVLEAKMAKKNEALGFCLVTAGLGLDDEKLEYVCEAAKAVQKEVPNLLLIACNGMASVEQLKELKKAGIFSYNHNLESSKEFFPQICTTHTWESRFQTNLNAKEAGLMLCCGGIYGMGESEEDRLSFRKSLQELQPFSTPINFFIANENLKLQVPRLSADEALKIVRDTKEALPQSVVMVAGGREVVLRERQYEIFQAGAGAIVIGDYLTTKGEEPSQDIIKLKEMGFTFASECH</sequence>
<comment type="function">
    <text evidence="1">Catalyzes the conversion of dethiobiotin (DTB) to biotin by the insertion of a sulfur atom into dethiobiotin via a radical-based mechanism.</text>
</comment>
<comment type="catalytic activity">
    <reaction evidence="1">
        <text>(4R,5S)-dethiobiotin + (sulfur carrier)-SH + 2 reduced [2Fe-2S]-[ferredoxin] + 2 S-adenosyl-L-methionine = (sulfur carrier)-H + biotin + 2 5'-deoxyadenosine + 2 L-methionine + 2 oxidized [2Fe-2S]-[ferredoxin]</text>
        <dbReference type="Rhea" id="RHEA:22060"/>
        <dbReference type="Rhea" id="RHEA-COMP:10000"/>
        <dbReference type="Rhea" id="RHEA-COMP:10001"/>
        <dbReference type="Rhea" id="RHEA-COMP:14737"/>
        <dbReference type="Rhea" id="RHEA-COMP:14739"/>
        <dbReference type="ChEBI" id="CHEBI:17319"/>
        <dbReference type="ChEBI" id="CHEBI:29917"/>
        <dbReference type="ChEBI" id="CHEBI:33737"/>
        <dbReference type="ChEBI" id="CHEBI:33738"/>
        <dbReference type="ChEBI" id="CHEBI:57586"/>
        <dbReference type="ChEBI" id="CHEBI:57844"/>
        <dbReference type="ChEBI" id="CHEBI:59789"/>
        <dbReference type="ChEBI" id="CHEBI:64428"/>
        <dbReference type="ChEBI" id="CHEBI:149473"/>
        <dbReference type="EC" id="2.8.1.6"/>
    </reaction>
</comment>
<comment type="cofactor">
    <cofactor evidence="1">
        <name>[4Fe-4S] cluster</name>
        <dbReference type="ChEBI" id="CHEBI:49883"/>
    </cofactor>
    <text evidence="1">Binds 1 [4Fe-4S] cluster. The cluster is coordinated with 3 cysteines and an exchangeable S-adenosyl-L-methionine.</text>
</comment>
<comment type="cofactor">
    <cofactor evidence="1">
        <name>[2Fe-2S] cluster</name>
        <dbReference type="ChEBI" id="CHEBI:190135"/>
    </cofactor>
    <text evidence="1">Binds 1 [2Fe-2S] cluster. The cluster is coordinated with 3 cysteines and 1 arginine.</text>
</comment>
<comment type="pathway">
    <text evidence="1">Cofactor biosynthesis; biotin biosynthesis; biotin from 7,8-diaminononanoate: step 2/2.</text>
</comment>
<comment type="subunit">
    <text evidence="1">Homodimer.</text>
</comment>
<comment type="similarity">
    <text evidence="1">Belongs to the radical SAM superfamily. Biotin synthase family.</text>
</comment>
<name>BIOB_CAMJE</name>
<feature type="chain" id="PRO_0000381286" description="Biotin synthase">
    <location>
        <begin position="1"/>
        <end position="278"/>
    </location>
</feature>
<feature type="domain" description="Radical SAM core" evidence="2">
    <location>
        <begin position="1"/>
        <end position="227"/>
    </location>
</feature>
<feature type="binding site" evidence="1">
    <location>
        <position position="16"/>
    </location>
    <ligand>
        <name>[4Fe-4S] cluster</name>
        <dbReference type="ChEBI" id="CHEBI:49883"/>
        <note>4Fe-4S-S-AdoMet</note>
    </ligand>
</feature>
<feature type="binding site" evidence="1">
    <location>
        <position position="20"/>
    </location>
    <ligand>
        <name>[4Fe-4S] cluster</name>
        <dbReference type="ChEBI" id="CHEBI:49883"/>
        <note>4Fe-4S-S-AdoMet</note>
    </ligand>
</feature>
<feature type="binding site" evidence="1">
    <location>
        <position position="23"/>
    </location>
    <ligand>
        <name>[4Fe-4S] cluster</name>
        <dbReference type="ChEBI" id="CHEBI:49883"/>
        <note>4Fe-4S-S-AdoMet</note>
    </ligand>
</feature>
<feature type="binding site" evidence="1">
    <location>
        <position position="60"/>
    </location>
    <ligand>
        <name>[2Fe-2S] cluster</name>
        <dbReference type="ChEBI" id="CHEBI:190135"/>
    </ligand>
</feature>
<feature type="binding site" evidence="1">
    <location>
        <position position="96"/>
    </location>
    <ligand>
        <name>[2Fe-2S] cluster</name>
        <dbReference type="ChEBI" id="CHEBI:190135"/>
    </ligand>
</feature>
<feature type="binding site" evidence="1">
    <location>
        <position position="154"/>
    </location>
    <ligand>
        <name>[2Fe-2S] cluster</name>
        <dbReference type="ChEBI" id="CHEBI:190135"/>
    </ligand>
</feature>
<protein>
    <recommendedName>
        <fullName evidence="1">Biotin synthase</fullName>
        <ecNumber evidence="1">2.8.1.6</ecNumber>
    </recommendedName>
</protein>
<keyword id="KW-0001">2Fe-2S</keyword>
<keyword id="KW-0004">4Fe-4S</keyword>
<keyword id="KW-0093">Biotin biosynthesis</keyword>
<keyword id="KW-0408">Iron</keyword>
<keyword id="KW-0411">Iron-sulfur</keyword>
<keyword id="KW-0479">Metal-binding</keyword>
<keyword id="KW-1185">Reference proteome</keyword>
<keyword id="KW-0949">S-adenosyl-L-methionine</keyword>
<keyword id="KW-0808">Transferase</keyword>
<evidence type="ECO:0000255" key="1">
    <source>
        <dbReference type="HAMAP-Rule" id="MF_01694"/>
    </source>
</evidence>
<evidence type="ECO:0000255" key="2">
    <source>
        <dbReference type="PROSITE-ProRule" id="PRU01266"/>
    </source>
</evidence>
<reference key="1">
    <citation type="journal article" date="2000" name="Nature">
        <title>The genome sequence of the food-borne pathogen Campylobacter jejuni reveals hypervariable sequences.</title>
        <authorList>
            <person name="Parkhill J."/>
            <person name="Wren B.W."/>
            <person name="Mungall K.L."/>
            <person name="Ketley J.M."/>
            <person name="Churcher C.M."/>
            <person name="Basham D."/>
            <person name="Chillingworth T."/>
            <person name="Davies R.M."/>
            <person name="Feltwell T."/>
            <person name="Holroyd S."/>
            <person name="Jagels K."/>
            <person name="Karlyshev A.V."/>
            <person name="Moule S."/>
            <person name="Pallen M.J."/>
            <person name="Penn C.W."/>
            <person name="Quail M.A."/>
            <person name="Rajandream M.A."/>
            <person name="Rutherford K.M."/>
            <person name="van Vliet A.H.M."/>
            <person name="Whitehead S."/>
            <person name="Barrell B.G."/>
        </authorList>
    </citation>
    <scope>NUCLEOTIDE SEQUENCE [LARGE SCALE GENOMIC DNA]</scope>
    <source>
        <strain>ATCC 700819 / NCTC 11168</strain>
    </source>
</reference>
<organism>
    <name type="scientific">Campylobacter jejuni subsp. jejuni serotype O:2 (strain ATCC 700819 / NCTC 11168)</name>
    <dbReference type="NCBI Taxonomy" id="192222"/>
    <lineage>
        <taxon>Bacteria</taxon>
        <taxon>Pseudomonadati</taxon>
        <taxon>Campylobacterota</taxon>
        <taxon>Epsilonproteobacteria</taxon>
        <taxon>Campylobacterales</taxon>
        <taxon>Campylobacteraceae</taxon>
        <taxon>Campylobacter</taxon>
    </lineage>
</organism>